<feature type="chain" id="PRO_0000348900" description="Trehalose-6-phosphate synthase">
    <location>
        <begin position="1"/>
        <end position="474"/>
    </location>
</feature>
<feature type="binding site" evidence="1">
    <location>
        <position position="10"/>
    </location>
    <ligand>
        <name>D-glucose 6-phosphate</name>
        <dbReference type="ChEBI" id="CHEBI:61548"/>
    </ligand>
</feature>
<feature type="binding site" evidence="1">
    <location>
        <begin position="22"/>
        <end position="23"/>
    </location>
    <ligand>
        <name>UDP-alpha-D-glucose</name>
        <dbReference type="ChEBI" id="CHEBI:58885"/>
    </ligand>
</feature>
<feature type="binding site" evidence="1">
    <location>
        <position position="77"/>
    </location>
    <ligand>
        <name>D-glucose 6-phosphate</name>
        <dbReference type="ChEBI" id="CHEBI:61548"/>
    </ligand>
</feature>
<feature type="binding site" evidence="1">
    <location>
        <position position="131"/>
    </location>
    <ligand>
        <name>D-glucose 6-phosphate</name>
        <dbReference type="ChEBI" id="CHEBI:61548"/>
    </ligand>
</feature>
<feature type="binding site" evidence="1">
    <location>
        <position position="263"/>
    </location>
    <ligand>
        <name>UDP-alpha-D-glucose</name>
        <dbReference type="ChEBI" id="CHEBI:58885"/>
    </ligand>
</feature>
<feature type="binding site" evidence="1">
    <location>
        <position position="268"/>
    </location>
    <ligand>
        <name>UDP-alpha-D-glucose</name>
        <dbReference type="ChEBI" id="CHEBI:58885"/>
    </ligand>
</feature>
<feature type="binding site" evidence="1">
    <location>
        <position position="301"/>
    </location>
    <ligand>
        <name>D-glucose 6-phosphate</name>
        <dbReference type="ChEBI" id="CHEBI:61548"/>
    </ligand>
</feature>
<feature type="binding site" evidence="1">
    <location>
        <position position="340"/>
    </location>
    <ligand>
        <name>UDP-alpha-D-glucose</name>
        <dbReference type="ChEBI" id="CHEBI:58885"/>
    </ligand>
</feature>
<feature type="binding site" evidence="1">
    <location>
        <begin position="366"/>
        <end position="370"/>
    </location>
    <ligand>
        <name>UDP-alpha-D-glucose</name>
        <dbReference type="ChEBI" id="CHEBI:58885"/>
    </ligand>
</feature>
<feature type="site" description="Involved in alpha anomer selectivity" evidence="1">
    <location>
        <position position="86"/>
    </location>
</feature>
<feature type="site" description="Involved in alpha anomer selectivity" evidence="1">
    <location>
        <position position="156"/>
    </location>
</feature>
<comment type="function">
    <text evidence="1">Probably involved in the osmoprotection via the biosynthesis of trehalose. Catalyzes the transfer of glucose from UDP-alpha-D-glucose (UDP-Glc) to D-glucose 6-phosphate (Glc-6-P) to form trehalose-6-phosphate. Acts with retention of the anomeric configuration of the UDP-sugar donor.</text>
</comment>
<comment type="catalytic activity">
    <reaction evidence="1">
        <text>D-glucose 6-phosphate + UDP-alpha-D-glucose = alpha,alpha-trehalose 6-phosphate + UDP + H(+)</text>
        <dbReference type="Rhea" id="RHEA:18889"/>
        <dbReference type="ChEBI" id="CHEBI:15378"/>
        <dbReference type="ChEBI" id="CHEBI:58223"/>
        <dbReference type="ChEBI" id="CHEBI:58429"/>
        <dbReference type="ChEBI" id="CHEBI:58885"/>
        <dbReference type="ChEBI" id="CHEBI:61548"/>
        <dbReference type="EC" id="2.4.1.15"/>
    </reaction>
</comment>
<comment type="pathway">
    <text evidence="1">Glycan biosynthesis; trehalose biosynthesis.</text>
</comment>
<comment type="subunit">
    <text evidence="1">Homotetramer.</text>
</comment>
<comment type="similarity">
    <text evidence="1">Belongs to the glycosyltransferase 20 family.</text>
</comment>
<name>OTSA_ECOL5</name>
<dbReference type="EC" id="2.4.1.15" evidence="1"/>
<dbReference type="EMBL" id="CP000247">
    <property type="protein sequence ID" value="ABG69839.1"/>
    <property type="molecule type" value="Genomic_DNA"/>
</dbReference>
<dbReference type="RefSeq" id="WP_001296148.1">
    <property type="nucleotide sequence ID" value="NC_008253.1"/>
</dbReference>
<dbReference type="SMR" id="Q0TGU0"/>
<dbReference type="CAZy" id="GT20">
    <property type="family name" value="Glycosyltransferase Family 20"/>
</dbReference>
<dbReference type="KEGG" id="ecp:ECP_1838"/>
<dbReference type="HOGENOM" id="CLU_002351_7_1_6"/>
<dbReference type="UniPathway" id="UPA00299"/>
<dbReference type="Proteomes" id="UP000009182">
    <property type="component" value="Chromosome"/>
</dbReference>
<dbReference type="GO" id="GO:0003825">
    <property type="term" value="F:alpha,alpha-trehalose-phosphate synthase (UDP-forming) activity"/>
    <property type="evidence" value="ECO:0007669"/>
    <property type="project" value="UniProtKB-EC"/>
</dbReference>
<dbReference type="GO" id="GO:0005992">
    <property type="term" value="P:trehalose biosynthetic process"/>
    <property type="evidence" value="ECO:0007669"/>
    <property type="project" value="UniProtKB-UniPathway"/>
</dbReference>
<dbReference type="CDD" id="cd03788">
    <property type="entry name" value="GT20_TPS"/>
    <property type="match status" value="1"/>
</dbReference>
<dbReference type="FunFam" id="3.40.50.2000:FF:000024">
    <property type="entry name" value="Trehalose-6-phosphate synthase"/>
    <property type="match status" value="1"/>
</dbReference>
<dbReference type="Gene3D" id="3.40.50.2000">
    <property type="entry name" value="Glycogen Phosphorylase B"/>
    <property type="match status" value="2"/>
</dbReference>
<dbReference type="InterPro" id="IPR001830">
    <property type="entry name" value="Glyco_trans_20"/>
</dbReference>
<dbReference type="InterPro" id="IPR012766">
    <property type="entry name" value="Trehalose_OtsA"/>
</dbReference>
<dbReference type="NCBIfam" id="NF007513">
    <property type="entry name" value="PRK10117.1"/>
    <property type="match status" value="1"/>
</dbReference>
<dbReference type="NCBIfam" id="TIGR02400">
    <property type="entry name" value="trehalose_OtsA"/>
    <property type="match status" value="1"/>
</dbReference>
<dbReference type="PANTHER" id="PTHR10788:SF106">
    <property type="entry name" value="BCDNA.GH08860"/>
    <property type="match status" value="1"/>
</dbReference>
<dbReference type="PANTHER" id="PTHR10788">
    <property type="entry name" value="TREHALOSE-6-PHOSPHATE SYNTHASE"/>
    <property type="match status" value="1"/>
</dbReference>
<dbReference type="Pfam" id="PF00982">
    <property type="entry name" value="Glyco_transf_20"/>
    <property type="match status" value="1"/>
</dbReference>
<dbReference type="SUPFAM" id="SSF53756">
    <property type="entry name" value="UDP-Glycosyltransferase/glycogen phosphorylase"/>
    <property type="match status" value="1"/>
</dbReference>
<sequence>MSRLVVVSNRIAPPDEHAASAGGLAVGILGALKAAGGLWFGWSGETGNEDQPLKKVKKGNITWASFNLSEQDLDEYYNKFSNAVLWPAFHYRLDLVQFQRPAWDGYLRVNALLADKLLPLLQDDDIIWIHDYHLLPFAHELRKRGVNNRIGFFLHIPFPTPEIFNALPTYDTLLEQLCDYDLLGFQTENDRLAFLDCLSNLTRVTTRSAKSHTACGKAFRTEVYPIGIEPKEIAKQAAGPLPPKLAQLKAELKNVQNIFSVERLDYSKGLPERFLAYEALLEKYPQHHGKIRYTQIAPTSRGDVQAYQDIRHQLENEAGRINGKYGQLGWTPLYYLNQHFDRKLLMKIFRYSDVGLVTPLRDGMNLVAKEYVAAQDPANPGVLVLSQFAGAANELTSALIVNPYDRDEVAAALDRALTMSLAERISRHAEMLDVIVKNDINHWQECFISDLKQIVPRSAESQQRDKVATFPKLA</sequence>
<evidence type="ECO:0000250" key="1">
    <source>
        <dbReference type="UniProtKB" id="P31677"/>
    </source>
</evidence>
<organism>
    <name type="scientific">Escherichia coli O6:K15:H31 (strain 536 / UPEC)</name>
    <dbReference type="NCBI Taxonomy" id="362663"/>
    <lineage>
        <taxon>Bacteria</taxon>
        <taxon>Pseudomonadati</taxon>
        <taxon>Pseudomonadota</taxon>
        <taxon>Gammaproteobacteria</taxon>
        <taxon>Enterobacterales</taxon>
        <taxon>Enterobacteriaceae</taxon>
        <taxon>Escherichia</taxon>
    </lineage>
</organism>
<accession>Q0TGU0</accession>
<gene>
    <name evidence="1" type="primary">otsA</name>
    <name type="ordered locus">ECP_1838</name>
</gene>
<keyword id="KW-0328">Glycosyltransferase</keyword>
<keyword id="KW-0808">Transferase</keyword>
<protein>
    <recommendedName>
        <fullName evidence="1">Trehalose-6-phosphate synthase</fullName>
        <shortName evidence="1">TPS</shortName>
        <ecNumber evidence="1">2.4.1.15</ecNumber>
    </recommendedName>
    <alternativeName>
        <fullName evidence="1">Alpha,alpha-trehalose-phosphate synthase [UDP-forming]</fullName>
    </alternativeName>
    <alternativeName>
        <fullName evidence="1">Osmoregulatory trehalose synthesis protein A</fullName>
        <shortName evidence="1">OtsA</shortName>
    </alternativeName>
    <alternativeName>
        <fullName evidence="1">UDP-glucose-glucosephosphate glucosyltransferase</fullName>
    </alternativeName>
</protein>
<reference key="1">
    <citation type="journal article" date="2006" name="Mol. Microbiol.">
        <title>Role of pathogenicity island-associated integrases in the genome plasticity of uropathogenic Escherichia coli strain 536.</title>
        <authorList>
            <person name="Hochhut B."/>
            <person name="Wilde C."/>
            <person name="Balling G."/>
            <person name="Middendorf B."/>
            <person name="Dobrindt U."/>
            <person name="Brzuszkiewicz E."/>
            <person name="Gottschalk G."/>
            <person name="Carniel E."/>
            <person name="Hacker J."/>
        </authorList>
    </citation>
    <scope>NUCLEOTIDE SEQUENCE [LARGE SCALE GENOMIC DNA]</scope>
    <source>
        <strain>536 / UPEC</strain>
    </source>
</reference>
<proteinExistence type="inferred from homology"/>